<proteinExistence type="inferred from homology"/>
<gene>
    <name evidence="1" type="primary">rnpA</name>
    <name type="ordered locus">Mmwyl1_4486</name>
</gene>
<accession>A6W3V2</accession>
<keyword id="KW-0255">Endonuclease</keyword>
<keyword id="KW-0378">Hydrolase</keyword>
<keyword id="KW-0540">Nuclease</keyword>
<keyword id="KW-0694">RNA-binding</keyword>
<keyword id="KW-0819">tRNA processing</keyword>
<organism>
    <name type="scientific">Marinomonas sp. (strain MWYL1)</name>
    <dbReference type="NCBI Taxonomy" id="400668"/>
    <lineage>
        <taxon>Bacteria</taxon>
        <taxon>Pseudomonadati</taxon>
        <taxon>Pseudomonadota</taxon>
        <taxon>Gammaproteobacteria</taxon>
        <taxon>Oceanospirillales</taxon>
        <taxon>Oceanospirillaceae</taxon>
        <taxon>Marinomonas</taxon>
    </lineage>
</organism>
<dbReference type="EC" id="3.1.26.5" evidence="1"/>
<dbReference type="EMBL" id="CP000749">
    <property type="protein sequence ID" value="ABR73381.1"/>
    <property type="molecule type" value="Genomic_DNA"/>
</dbReference>
<dbReference type="SMR" id="A6W3V2"/>
<dbReference type="STRING" id="400668.Mmwyl1_4486"/>
<dbReference type="KEGG" id="mmw:Mmwyl1_4486"/>
<dbReference type="eggNOG" id="COG0594">
    <property type="taxonomic scope" value="Bacteria"/>
</dbReference>
<dbReference type="HOGENOM" id="CLU_117179_11_0_6"/>
<dbReference type="OrthoDB" id="9796422at2"/>
<dbReference type="GO" id="GO:0030677">
    <property type="term" value="C:ribonuclease P complex"/>
    <property type="evidence" value="ECO:0007669"/>
    <property type="project" value="TreeGrafter"/>
</dbReference>
<dbReference type="GO" id="GO:0042781">
    <property type="term" value="F:3'-tRNA processing endoribonuclease activity"/>
    <property type="evidence" value="ECO:0007669"/>
    <property type="project" value="TreeGrafter"/>
</dbReference>
<dbReference type="GO" id="GO:0004526">
    <property type="term" value="F:ribonuclease P activity"/>
    <property type="evidence" value="ECO:0007669"/>
    <property type="project" value="UniProtKB-UniRule"/>
</dbReference>
<dbReference type="GO" id="GO:0000049">
    <property type="term" value="F:tRNA binding"/>
    <property type="evidence" value="ECO:0007669"/>
    <property type="project" value="UniProtKB-UniRule"/>
</dbReference>
<dbReference type="GO" id="GO:0001682">
    <property type="term" value="P:tRNA 5'-leader removal"/>
    <property type="evidence" value="ECO:0007669"/>
    <property type="project" value="UniProtKB-UniRule"/>
</dbReference>
<dbReference type="Gene3D" id="3.30.230.10">
    <property type="match status" value="1"/>
</dbReference>
<dbReference type="HAMAP" id="MF_00227">
    <property type="entry name" value="RNase_P"/>
    <property type="match status" value="1"/>
</dbReference>
<dbReference type="InterPro" id="IPR020568">
    <property type="entry name" value="Ribosomal_Su5_D2-typ_SF"/>
</dbReference>
<dbReference type="InterPro" id="IPR014721">
    <property type="entry name" value="Ribsml_uS5_D2-typ_fold_subgr"/>
</dbReference>
<dbReference type="InterPro" id="IPR000100">
    <property type="entry name" value="RNase_P"/>
</dbReference>
<dbReference type="InterPro" id="IPR020539">
    <property type="entry name" value="RNase_P_CS"/>
</dbReference>
<dbReference type="NCBIfam" id="TIGR00188">
    <property type="entry name" value="rnpA"/>
    <property type="match status" value="1"/>
</dbReference>
<dbReference type="PANTHER" id="PTHR33992">
    <property type="entry name" value="RIBONUCLEASE P PROTEIN COMPONENT"/>
    <property type="match status" value="1"/>
</dbReference>
<dbReference type="PANTHER" id="PTHR33992:SF1">
    <property type="entry name" value="RIBONUCLEASE P PROTEIN COMPONENT"/>
    <property type="match status" value="1"/>
</dbReference>
<dbReference type="Pfam" id="PF00825">
    <property type="entry name" value="Ribonuclease_P"/>
    <property type="match status" value="1"/>
</dbReference>
<dbReference type="SUPFAM" id="SSF54211">
    <property type="entry name" value="Ribosomal protein S5 domain 2-like"/>
    <property type="match status" value="1"/>
</dbReference>
<dbReference type="PROSITE" id="PS00648">
    <property type="entry name" value="RIBONUCLEASE_P"/>
    <property type="match status" value="1"/>
</dbReference>
<evidence type="ECO:0000255" key="1">
    <source>
        <dbReference type="HAMAP-Rule" id="MF_00227"/>
    </source>
</evidence>
<sequence>MTEYCFPRHVRLLNAGDYQSVFNDTSSKVFAGEFLLLARKRDDDQTRLGLIVSKKTDKRAVGRNRIKRLVRDSFRHHKIPLSGLDIVFLARHGIKELENADLHNRLDKAWDQLAKKALKPTQNKKRDQSRQK</sequence>
<protein>
    <recommendedName>
        <fullName evidence="1">Ribonuclease P protein component</fullName>
        <shortName evidence="1">RNase P protein</shortName>
        <shortName evidence="1">RNaseP protein</shortName>
        <ecNumber evidence="1">3.1.26.5</ecNumber>
    </recommendedName>
    <alternativeName>
        <fullName evidence="1">Protein C5</fullName>
    </alternativeName>
</protein>
<comment type="function">
    <text evidence="1">RNaseP catalyzes the removal of the 5'-leader sequence from pre-tRNA to produce the mature 5'-terminus. It can also cleave other RNA substrates such as 4.5S RNA. The protein component plays an auxiliary but essential role in vivo by binding to the 5'-leader sequence and broadening the substrate specificity of the ribozyme.</text>
</comment>
<comment type="catalytic activity">
    <reaction evidence="1">
        <text>Endonucleolytic cleavage of RNA, removing 5'-extranucleotides from tRNA precursor.</text>
        <dbReference type="EC" id="3.1.26.5"/>
    </reaction>
</comment>
<comment type="subunit">
    <text evidence="1">Consists of a catalytic RNA component (M1 or rnpB) and a protein subunit.</text>
</comment>
<comment type="similarity">
    <text evidence="1">Belongs to the RnpA family.</text>
</comment>
<feature type="chain" id="PRO_1000194650" description="Ribonuclease P protein component">
    <location>
        <begin position="1"/>
        <end position="132"/>
    </location>
</feature>
<name>RNPA_MARMS</name>
<reference key="1">
    <citation type="submission" date="2007-06" db="EMBL/GenBank/DDBJ databases">
        <title>Complete sequence of Marinomonas sp. MWYL1.</title>
        <authorList>
            <consortium name="US DOE Joint Genome Institute"/>
            <person name="Copeland A."/>
            <person name="Lucas S."/>
            <person name="Lapidus A."/>
            <person name="Barry K."/>
            <person name="Glavina del Rio T."/>
            <person name="Dalin E."/>
            <person name="Tice H."/>
            <person name="Pitluck S."/>
            <person name="Kiss H."/>
            <person name="Brettin T."/>
            <person name="Bruce D."/>
            <person name="Detter J.C."/>
            <person name="Han C."/>
            <person name="Schmutz J."/>
            <person name="Larimer F."/>
            <person name="Land M."/>
            <person name="Hauser L."/>
            <person name="Kyrpides N."/>
            <person name="Kim E."/>
            <person name="Johnston A.W.B."/>
            <person name="Todd J.D."/>
            <person name="Rogers R."/>
            <person name="Wexler M."/>
            <person name="Bond P.L."/>
            <person name="Li Y."/>
            <person name="Richardson P."/>
        </authorList>
    </citation>
    <scope>NUCLEOTIDE SEQUENCE [LARGE SCALE GENOMIC DNA]</scope>
    <source>
        <strain>MWYL1</strain>
    </source>
</reference>